<dbReference type="EC" id="6.3.2.-" evidence="3"/>
<dbReference type="EMBL" id="CH476603">
    <property type="protein sequence ID" value="EAU32742.1"/>
    <property type="molecule type" value="Genomic_DNA"/>
</dbReference>
<dbReference type="RefSeq" id="XP_001210044.1">
    <property type="nucleotide sequence ID" value="XM_001210044.1"/>
</dbReference>
<dbReference type="SMR" id="Q0CG34"/>
<dbReference type="STRING" id="341663.Q0CG34"/>
<dbReference type="EnsemblFungi" id="EAU32742">
    <property type="protein sequence ID" value="EAU32742"/>
    <property type="gene ID" value="ATEG_07358"/>
</dbReference>
<dbReference type="GeneID" id="4319033"/>
<dbReference type="VEuPathDB" id="FungiDB:ATEG_07358"/>
<dbReference type="eggNOG" id="KOG1178">
    <property type="taxonomic scope" value="Eukaryota"/>
</dbReference>
<dbReference type="HOGENOM" id="CLU_000022_60_4_1"/>
<dbReference type="OMA" id="CECTPIT"/>
<dbReference type="OrthoDB" id="416786at2759"/>
<dbReference type="Proteomes" id="UP000007963">
    <property type="component" value="Unassembled WGS sequence"/>
</dbReference>
<dbReference type="GO" id="GO:0005737">
    <property type="term" value="C:cytoplasm"/>
    <property type="evidence" value="ECO:0007669"/>
    <property type="project" value="TreeGrafter"/>
</dbReference>
<dbReference type="GO" id="GO:0016874">
    <property type="term" value="F:ligase activity"/>
    <property type="evidence" value="ECO:0007669"/>
    <property type="project" value="UniProtKB-KW"/>
</dbReference>
<dbReference type="GO" id="GO:0031177">
    <property type="term" value="F:phosphopantetheine binding"/>
    <property type="evidence" value="ECO:0007669"/>
    <property type="project" value="TreeGrafter"/>
</dbReference>
<dbReference type="GO" id="GO:0043041">
    <property type="term" value="P:amino acid activation for nonribosomal peptide biosynthetic process"/>
    <property type="evidence" value="ECO:0007669"/>
    <property type="project" value="TreeGrafter"/>
</dbReference>
<dbReference type="GO" id="GO:0044550">
    <property type="term" value="P:secondary metabolite biosynthetic process"/>
    <property type="evidence" value="ECO:0007669"/>
    <property type="project" value="TreeGrafter"/>
</dbReference>
<dbReference type="CDD" id="cd05918">
    <property type="entry name" value="A_NRPS_SidN3_like"/>
    <property type="match status" value="2"/>
</dbReference>
<dbReference type="CDD" id="cd19542">
    <property type="entry name" value="CT_NRPS-like"/>
    <property type="match status" value="1"/>
</dbReference>
<dbReference type="CDD" id="cd19545">
    <property type="entry name" value="FUM14_C_NRPS-like"/>
    <property type="match status" value="1"/>
</dbReference>
<dbReference type="FunFam" id="3.30.300.30:FF:000015">
    <property type="entry name" value="Nonribosomal peptide synthase SidD"/>
    <property type="match status" value="2"/>
</dbReference>
<dbReference type="FunFam" id="3.30.559.30:FF:000003">
    <property type="entry name" value="Nonribosomal peptide synthase SidD"/>
    <property type="match status" value="1"/>
</dbReference>
<dbReference type="FunFam" id="3.40.50.12780:FF:000014">
    <property type="entry name" value="Nonribosomal peptide synthetase 1"/>
    <property type="match status" value="1"/>
</dbReference>
<dbReference type="Gene3D" id="3.30.300.30">
    <property type="match status" value="2"/>
</dbReference>
<dbReference type="Gene3D" id="1.10.1200.10">
    <property type="entry name" value="ACP-like"/>
    <property type="match status" value="3"/>
</dbReference>
<dbReference type="Gene3D" id="3.30.559.10">
    <property type="entry name" value="Chloramphenicol acetyltransferase-like domain"/>
    <property type="match status" value="2"/>
</dbReference>
<dbReference type="Gene3D" id="3.40.50.12780">
    <property type="entry name" value="N-terminal domain of ligase-like"/>
    <property type="match status" value="2"/>
</dbReference>
<dbReference type="Gene3D" id="3.30.559.30">
    <property type="entry name" value="Nonribosomal peptide synthetase, condensation domain"/>
    <property type="match status" value="2"/>
</dbReference>
<dbReference type="InterPro" id="IPR010071">
    <property type="entry name" value="AA_adenyl_dom"/>
</dbReference>
<dbReference type="InterPro" id="IPR036736">
    <property type="entry name" value="ACP-like_sf"/>
</dbReference>
<dbReference type="InterPro" id="IPR045851">
    <property type="entry name" value="AMP-bd_C_sf"/>
</dbReference>
<dbReference type="InterPro" id="IPR000873">
    <property type="entry name" value="AMP-dep_synth/lig_dom"/>
</dbReference>
<dbReference type="InterPro" id="IPR042099">
    <property type="entry name" value="ANL_N_sf"/>
</dbReference>
<dbReference type="InterPro" id="IPR023213">
    <property type="entry name" value="CAT-like_dom_sf"/>
</dbReference>
<dbReference type="InterPro" id="IPR001242">
    <property type="entry name" value="Condensatn"/>
</dbReference>
<dbReference type="InterPro" id="IPR009081">
    <property type="entry name" value="PP-bd_ACP"/>
</dbReference>
<dbReference type="InterPro" id="IPR006162">
    <property type="entry name" value="Ppantetheine_attach_site"/>
</dbReference>
<dbReference type="NCBIfam" id="TIGR01733">
    <property type="entry name" value="AA-adenyl-dom"/>
    <property type="match status" value="1"/>
</dbReference>
<dbReference type="PANTHER" id="PTHR45527:SF1">
    <property type="entry name" value="FATTY ACID SYNTHASE"/>
    <property type="match status" value="1"/>
</dbReference>
<dbReference type="PANTHER" id="PTHR45527">
    <property type="entry name" value="NONRIBOSOMAL PEPTIDE SYNTHETASE"/>
    <property type="match status" value="1"/>
</dbReference>
<dbReference type="Pfam" id="PF00501">
    <property type="entry name" value="AMP-binding"/>
    <property type="match status" value="2"/>
</dbReference>
<dbReference type="Pfam" id="PF00668">
    <property type="entry name" value="Condensation"/>
    <property type="match status" value="2"/>
</dbReference>
<dbReference type="Pfam" id="PF00550">
    <property type="entry name" value="PP-binding"/>
    <property type="match status" value="3"/>
</dbReference>
<dbReference type="SUPFAM" id="SSF56801">
    <property type="entry name" value="Acetyl-CoA synthetase-like"/>
    <property type="match status" value="2"/>
</dbReference>
<dbReference type="SUPFAM" id="SSF47336">
    <property type="entry name" value="ACP-like"/>
    <property type="match status" value="3"/>
</dbReference>
<dbReference type="SUPFAM" id="SSF52777">
    <property type="entry name" value="CoA-dependent acyltransferases"/>
    <property type="match status" value="4"/>
</dbReference>
<dbReference type="PROSITE" id="PS50075">
    <property type="entry name" value="CARRIER"/>
    <property type="match status" value="3"/>
</dbReference>
<dbReference type="PROSITE" id="PS00012">
    <property type="entry name" value="PHOSPHOPANTETHEINE"/>
    <property type="match status" value="3"/>
</dbReference>
<proteinExistence type="evidence at protein level"/>
<keyword id="KW-0436">Ligase</keyword>
<keyword id="KW-0596">Phosphopantetheine</keyword>
<keyword id="KW-0597">Phosphoprotein</keyword>
<keyword id="KW-1185">Reference proteome</keyword>
<keyword id="KW-0677">Repeat</keyword>
<sequence length="2515" mass="278716">MRLTIPPSSMEEPKGKLSEEENVCLFPKLTQVGLPAPASVAIETVGLGLEISRAMNERFSYDRLLELQVMLSTVWAIVIHRFVEANPVFFAMVIDDEVSASTESCRNLWKTLIDPTTSVGVLNDIKRWEICPLAEHHQGSFNTGLFILSKNLETAQMLDVNLVAQPKGSEFTLELVYQPKHLSPFHAQHLMSAVSSAIHGVASAEPNRSLCDISLCTSSQQKQILYWQNSRLKEGPSLAMYQIVAELATRQPGAQAVQSSKSALTYLELDDLSSRLAIHLQARYNLAPGAMIMLCATKDVWAVVAMLAINKTGACFVPCDASHPVSRRQTMAGKCQSELALVSPEHETLFQGIIKESFIISEATVTKLPQETRDSWTVGERFPVAPSTPAYCFFTSGSLGEPKGCLGTHSALAAVAHQVPALRMDTKSRVLQFAKFGFGISFIEIFCTLAAGGTVCIASEHERLNALDAAIRRMEVNWALITPTLAQSLSPEEIPTLRKLFLGGEAPNDDLISRWQSKASLFQVFGTTEMAGVTMVSSEITSTAQRKIVGFPANSRIWLVESTGKDSNDTRLAPIGAVAELLIEGPSLAEGYLGDPVRTQASFLSLPSWLPDGYSGSTRLYKTGDLVRYNGDGSLSYIGRMGTQVKLRGQRIELEEVECHLVRLLPGTHSFSEARLVIALVVEPRGDAEKRTLAAFVLVPPKVNSPRSSDTGRLEFVKPDTPHLYEELEDIRQRLQGTLPSFMVPQLLFVLTDVPRTVTGKIDRSGLQRQINALPYDELRRISGRRVDMQVPGSEVEHLIHAIVCEILAIRSDQVSMRDDFFHLGGNSMSAIKLAAAAKRRSLKLVVADIFKHSVLADMATVALKTSNGVHAHTTIHGTTIHGAPTKTTLERFKLLSEYSVTREDINEAVATQCGISYSSLTVDAYPCSPLQEGMMSMTEKSATMYRAQVVCKLHSGIQIDRFQAAWEGVVENNDILRTRLISVSSKGMWQIVISEPFEWDRDASRAVSDSMGLGTRLVRAAIETSKDGAVFILTIHHVLCDLWTIRLLLDQLWSSYDSITDGVAGPNYYRPFIEYVLERSRDPASASYWKARFSGLEAEAFPRLPQPDLSPSPDEKTTCHINLPPLVTGGITVATYLRLAWAMVVSHHTAVDDVVFGETLNGRSGRLQEQSDESLEKIVGPAIVTVPQRILLDPERSVAETLSLIQEQQTQMISFEQVGLQHIRRLSPEADCACMFQSHLVFQPAWKPPGQLFKSVEAGASEVGGFSSYALGLECGLSEDENEVDITAYFDSRVVSRAQAARLLNHLEMVLQSLVQEPYQTIRSVPHITPEDLDQIHAWNVTLPDGLKECAHEAIRKQSQETPSAPAIRAWDGDLTYEELEHYSNQIAVAIVDRGIRQGSLIPLLFEKSMWMTVAMIGVNKAGGAFVPMDSAQPLQRLRVIAELTECTVILCSKSNTELAKQISPNAIILPVPGCREGGSIMQDSGQGLVDLQCLPKVQPHDLMYAVFTSGSTGTPKGVLIEHGSYCTAARECSSAHEIDRQSRMLQFASYSFDAFLAESLNTLVVGGCVCVPSEKDRQNGLAKAMREMQVTHAMLTPAISRLFRHEDVPSLRSLILMGEAMRSADFDYWGSHIQLFNGYGPTECTIALSCREYQAGVHVNDIGWPRAAAAWIIDPRNPNRLMPIGAVGELVVEGPPVARGYLKSPDQTSKAFISPPSWRPQTHQSHRMYRTGDLVSYTEDRSLRIVGRMNDQIKLRSQRLERGEVESRLRQFWQPPGVEVAVDVIVPAGDADRVSLAAFIVQEGSEQNNSDKNADHGTDCRSLCRNPTAEFSRVATQVEAQLQQELPRFMVPSIFVPVSRMPHMPSGKIDRPRLKRELEASPWEELRRYLPSAAPSRLATTNEERTLQEIWAQVLHLPSSKVGIDDNFFHLGGDSVNGMQAVVQARARNIPHTLEEIFRWKTIAAILSHLTGRKHQERPPRHHDSNLTKTNNHLESFRGTLARSRLPFEGVEDIYPCGPIQQNILLVHSRRPAFYHVAFTWEIHDATVDMVVRAVKQLIARHAIFRTRFLEPDIVDGSFLQIVLRQGQQDIPIRSVSEGLIDFPGDFQPTARCPSQFTIYHRDWSSVHVRLDITHALWDGGPATVVERELGLASHSKPLPPDPPLYRDYISYVQSQDLAAGEAFWSSHIKDTSPCHFPSLRATRMYEPDVPQDLHFELDQHAEVGPFCRRHNVTAPNMFCLAWGLVLRAVTSMDEVCFGNVVSGRDLPLTGALEMVGPLINLLPCRINLREGTVIETLQRIYHDYAACLSHQAFPIANLPHSSGRSALTLFNTQLSIRRATTASQPGEEAPKACLRAIQSWDPHECRINVYVIMEESRTRVEMRYWKSAMSPAQAALIEKCFSAAVSQILAHGDQPLTELGILPPEEQKRVWEPSLSAAVVRLRELWAKVLDIPHHLIGGEDDFFRLGGNSVRALQVTGLAREAGMDLRVADVFTASTLHAMARRSLVVSQSG</sequence>
<evidence type="ECO:0000255" key="1"/>
<evidence type="ECO:0000255" key="2">
    <source>
        <dbReference type="PROSITE-ProRule" id="PRU00258"/>
    </source>
</evidence>
<evidence type="ECO:0000269" key="3">
    <source>
    </source>
</evidence>
<evidence type="ECO:0000303" key="4">
    <source>
    </source>
</evidence>
<evidence type="ECO:0000305" key="5"/>
<evidence type="ECO:0000305" key="6">
    <source>
    </source>
</evidence>
<organism>
    <name type="scientific">Aspergillus terreus (strain NIH 2624 / FGSC A1156)</name>
    <dbReference type="NCBI Taxonomy" id="341663"/>
    <lineage>
        <taxon>Eukaryota</taxon>
        <taxon>Fungi</taxon>
        <taxon>Dikarya</taxon>
        <taxon>Ascomycota</taxon>
        <taxon>Pezizomycotina</taxon>
        <taxon>Eurotiomycetes</taxon>
        <taxon>Eurotiomycetidae</taxon>
        <taxon>Eurotiales</taxon>
        <taxon>Aspergillaceae</taxon>
        <taxon>Aspergillus</taxon>
        <taxon>Aspergillus subgen. Circumdati</taxon>
    </lineage>
</organism>
<accession>Q0CG34</accession>
<gene>
    <name evidence="4" type="primary">tpzB</name>
    <name type="ORF">ATEG_07358</name>
</gene>
<reference key="1">
    <citation type="submission" date="2005-09" db="EMBL/GenBank/DDBJ databases">
        <title>Annotation of the Aspergillus terreus NIH2624 genome.</title>
        <authorList>
            <person name="Birren B.W."/>
            <person name="Lander E.S."/>
            <person name="Galagan J.E."/>
            <person name="Nusbaum C."/>
            <person name="Devon K."/>
            <person name="Henn M."/>
            <person name="Ma L.-J."/>
            <person name="Jaffe D.B."/>
            <person name="Butler J."/>
            <person name="Alvarez P."/>
            <person name="Gnerre S."/>
            <person name="Grabherr M."/>
            <person name="Kleber M."/>
            <person name="Mauceli E.W."/>
            <person name="Brockman W."/>
            <person name="Rounsley S."/>
            <person name="Young S.K."/>
            <person name="LaButti K."/>
            <person name="Pushparaj V."/>
            <person name="DeCaprio D."/>
            <person name="Crawford M."/>
            <person name="Koehrsen M."/>
            <person name="Engels R."/>
            <person name="Montgomery P."/>
            <person name="Pearson M."/>
            <person name="Howarth C."/>
            <person name="Larson L."/>
            <person name="Luoma S."/>
            <person name="White J."/>
            <person name="Alvarado L."/>
            <person name="Kodira C.D."/>
            <person name="Zeng Q."/>
            <person name="Oleary S."/>
            <person name="Yandava C."/>
            <person name="Denning D.W."/>
            <person name="Nierman W.C."/>
            <person name="Milne T."/>
            <person name="Madden K."/>
        </authorList>
    </citation>
    <scope>NUCLEOTIDE SEQUENCE [LARGE SCALE GENOMIC DNA]</scope>
    <source>
        <strain>NIH 2624 / FGSC A1156</strain>
    </source>
</reference>
<reference key="2">
    <citation type="journal article" date="2020" name="MBio">
        <title>Heterologous expression of the unusual terreazepine biosynthetic gene cluster reveals a promising approach for identifying new chemical scaffolds.</title>
        <authorList>
            <person name="Caesar L.K."/>
            <person name="Robey M.T."/>
            <person name="Swyers M."/>
            <person name="Islam M.N."/>
            <person name="Ye R."/>
            <person name="Vagadia P.P."/>
            <person name="Schiltz G.E."/>
            <person name="Thomas P.M."/>
            <person name="Wu C.C."/>
            <person name="Kelleher N.L."/>
            <person name="Keller N.P."/>
            <person name="Bok J.W."/>
        </authorList>
    </citation>
    <scope>FUNCTION</scope>
    <scope>DOMAIN</scope>
    <scope>CATALYTIC ACTIVITY</scope>
    <scope>PATHWAY</scope>
</reference>
<comment type="function">
    <text evidence="3">Nonribosomal peptide synthetase; part of the gene cluster that mediates the biosynthesis of terreazepine, (PubMed:32843555). The first step of terreazepine biosynthesis is catalyzed by the indoleamine 2,3-dioxygenase tpzB which produces N-formyl-kynurenine through the catabolism of tryptophan (PubMed:32843555). The two-module NRPS tpzA then utilizes anthranilate and kynurenine to assemble terreazepine (PubMed:32843555). The first adenylation domain of tpzA (A1) loads anthranilate onto the T1 domain, while A2 loads kynurenine, generated through spontaneous nonenzymatic deformylation of the tzpB-supplied N-formyl-kynurenine (PubMed:32843555). TpzA produces a 2:1 mixture of S-R enantiomers, which suggests that the A2 domain accepts both D- and L-kynurenine (PubMed:32843555). The peptide bond formation between the tethered amino acids is catalyzed by the first condensation domain (C1) between anthranilate's carbonyl carbon and kynurenine's aliphatic primary amine (PubMed:32843555). The second C domain (C2) catalyzes the final cyclization event between the aromatic amine of kynurenine and the tethered carbonyl carbon, yielding the final terreazepine product (PubMed:32843555). The T3 domain may facilitate the interaction with downstream tailoring enzymes (PubMed:32843555).</text>
</comment>
<comment type="pathway">
    <text evidence="3">Secondary metabolite biosynthesis.</text>
</comment>
<comment type="domain">
    <text evidence="3">NRP synthetases are composed of discrete domains (adenylation (A), thiolation (T) or peptidyl carrier protein (PCP) and condensation (C) domains) which when grouped together are referred to as a single module. Each module is responsible for the recognition (via the A domain) and incorporation of a single amino acid into the growing peptide product. Thus, an NRP synthetase is generally composed of one or more modules and can terminate in a thioesterase domain (TE) that releases the newly synthesized peptide from the enzyme. TpzA has the following architecture: A1-T1-C1-A2-T2-C2-T3.</text>
</comment>
<comment type="similarity">
    <text evidence="5">Belongs to the NRP synthetase family.</text>
</comment>
<protein>
    <recommendedName>
        <fullName evidence="4">Nonribosomal peptide synthetase tpzA</fullName>
        <ecNumber evidence="3">6.3.2.-</ecNumber>
    </recommendedName>
    <alternativeName>
        <fullName evidence="4">Terreazepine biosynthesis cluster protein A</fullName>
    </alternativeName>
</protein>
<feature type="chain" id="PRO_0000452965" description="Nonribosomal peptide synthetase tpzA">
    <location>
        <begin position="1"/>
        <end position="2515"/>
    </location>
</feature>
<feature type="domain" description="Carrier 1" evidence="2 6">
    <location>
        <begin position="794"/>
        <end position="867"/>
    </location>
</feature>
<feature type="domain" description="Carrier 2" evidence="2 6">
    <location>
        <begin position="1900"/>
        <end position="1976"/>
    </location>
</feature>
<feature type="domain" description="Carrier 3" evidence="2 6">
    <location>
        <begin position="2436"/>
        <end position="2512"/>
    </location>
</feature>
<feature type="region of interest" description="Adenylation 1" evidence="1 6">
    <location>
        <begin position="246"/>
        <end position="648"/>
    </location>
</feature>
<feature type="region of interest" description="Condensation 1" evidence="1 6">
    <location>
        <begin position="924"/>
        <end position="1332"/>
    </location>
</feature>
<feature type="region of interest" description="Adenylation 2" evidence="1 6">
    <location>
        <begin position="1357"/>
        <end position="1758"/>
    </location>
</feature>
<feature type="region of interest" description="Condensation 2" evidence="1 6">
    <location>
        <begin position="2013"/>
        <end position="2431"/>
    </location>
</feature>
<feature type="modified residue" description="O-(pantetheine 4'-phosphoryl)serine" evidence="2">
    <location>
        <position position="828"/>
    </location>
</feature>
<feature type="modified residue" description="O-(pantetheine 4'-phosphoryl)serine" evidence="2">
    <location>
        <position position="1937"/>
    </location>
</feature>
<feature type="modified residue" description="O-(pantetheine 4'-phosphoryl)serine" evidence="2">
    <location>
        <position position="2473"/>
    </location>
</feature>
<name>TPZA_ASPTN</name>